<evidence type="ECO:0000255" key="1">
    <source>
        <dbReference type="HAMAP-Rule" id="MF_00117"/>
    </source>
</evidence>
<protein>
    <recommendedName>
        <fullName evidence="1">33 kDa chaperonin</fullName>
    </recommendedName>
    <alternativeName>
        <fullName evidence="1">Heat shock protein 33 homolog</fullName>
        <shortName evidence="1">HSP33</shortName>
    </alternativeName>
</protein>
<reference key="1">
    <citation type="submission" date="2008-06" db="EMBL/GenBank/DDBJ databases">
        <title>Genome and proteome analysis of A. pleuropneumoniae serotype 7.</title>
        <authorList>
            <person name="Linke B."/>
            <person name="Buettner F."/>
            <person name="Martinez-Arias R."/>
            <person name="Goesmann A."/>
            <person name="Baltes N."/>
            <person name="Tegetmeyer H."/>
            <person name="Singh M."/>
            <person name="Gerlach G.F."/>
        </authorList>
    </citation>
    <scope>NUCLEOTIDE SEQUENCE [LARGE SCALE GENOMIC DNA]</scope>
    <source>
        <strain>AP76</strain>
    </source>
</reference>
<keyword id="KW-0143">Chaperone</keyword>
<keyword id="KW-0963">Cytoplasm</keyword>
<keyword id="KW-1015">Disulfide bond</keyword>
<keyword id="KW-0676">Redox-active center</keyword>
<keyword id="KW-0346">Stress response</keyword>
<keyword id="KW-0862">Zinc</keyword>
<organism>
    <name type="scientific">Actinobacillus pleuropneumoniae serotype 7 (strain AP76)</name>
    <dbReference type="NCBI Taxonomy" id="537457"/>
    <lineage>
        <taxon>Bacteria</taxon>
        <taxon>Pseudomonadati</taxon>
        <taxon>Pseudomonadota</taxon>
        <taxon>Gammaproteobacteria</taxon>
        <taxon>Pasteurellales</taxon>
        <taxon>Pasteurellaceae</taxon>
        <taxon>Actinobacillus</taxon>
    </lineage>
</organism>
<accession>B3GY94</accession>
<dbReference type="EMBL" id="CP001091">
    <property type="protein sequence ID" value="ACE62018.1"/>
    <property type="molecule type" value="Genomic_DNA"/>
</dbReference>
<dbReference type="RefSeq" id="WP_012478523.1">
    <property type="nucleotide sequence ID" value="NC_010939.1"/>
</dbReference>
<dbReference type="SMR" id="B3GY94"/>
<dbReference type="GeneID" id="48599560"/>
<dbReference type="KEGG" id="apa:APP7_1366"/>
<dbReference type="HOGENOM" id="CLU_054493_0_0_6"/>
<dbReference type="Proteomes" id="UP000001226">
    <property type="component" value="Chromosome"/>
</dbReference>
<dbReference type="GO" id="GO:0005737">
    <property type="term" value="C:cytoplasm"/>
    <property type="evidence" value="ECO:0007669"/>
    <property type="project" value="UniProtKB-SubCell"/>
</dbReference>
<dbReference type="GO" id="GO:0044183">
    <property type="term" value="F:protein folding chaperone"/>
    <property type="evidence" value="ECO:0007669"/>
    <property type="project" value="TreeGrafter"/>
</dbReference>
<dbReference type="GO" id="GO:0051082">
    <property type="term" value="F:unfolded protein binding"/>
    <property type="evidence" value="ECO:0007669"/>
    <property type="project" value="UniProtKB-UniRule"/>
</dbReference>
<dbReference type="GO" id="GO:0042026">
    <property type="term" value="P:protein refolding"/>
    <property type="evidence" value="ECO:0007669"/>
    <property type="project" value="TreeGrafter"/>
</dbReference>
<dbReference type="CDD" id="cd00498">
    <property type="entry name" value="Hsp33"/>
    <property type="match status" value="1"/>
</dbReference>
<dbReference type="Gene3D" id="1.10.287.480">
    <property type="entry name" value="helix hairpin bin"/>
    <property type="match status" value="1"/>
</dbReference>
<dbReference type="Gene3D" id="3.55.30.10">
    <property type="entry name" value="Hsp33 domain"/>
    <property type="match status" value="1"/>
</dbReference>
<dbReference type="Gene3D" id="3.90.1280.10">
    <property type="entry name" value="HSP33 redox switch-like"/>
    <property type="match status" value="1"/>
</dbReference>
<dbReference type="HAMAP" id="MF_00117">
    <property type="entry name" value="HslO"/>
    <property type="match status" value="1"/>
</dbReference>
<dbReference type="InterPro" id="IPR000397">
    <property type="entry name" value="Heat_shock_Hsp33"/>
</dbReference>
<dbReference type="InterPro" id="IPR016154">
    <property type="entry name" value="Heat_shock_Hsp33_C"/>
</dbReference>
<dbReference type="InterPro" id="IPR016153">
    <property type="entry name" value="Heat_shock_Hsp33_N"/>
</dbReference>
<dbReference type="InterPro" id="IPR023212">
    <property type="entry name" value="Hsp33_helix_hairpin_bin_dom_sf"/>
</dbReference>
<dbReference type="NCBIfam" id="NF001033">
    <property type="entry name" value="PRK00114.1"/>
    <property type="match status" value="1"/>
</dbReference>
<dbReference type="PANTHER" id="PTHR30111">
    <property type="entry name" value="33 KDA CHAPERONIN"/>
    <property type="match status" value="1"/>
</dbReference>
<dbReference type="PANTHER" id="PTHR30111:SF1">
    <property type="entry name" value="33 KDA CHAPERONIN"/>
    <property type="match status" value="1"/>
</dbReference>
<dbReference type="Pfam" id="PF01430">
    <property type="entry name" value="HSP33"/>
    <property type="match status" value="1"/>
</dbReference>
<dbReference type="PIRSF" id="PIRSF005261">
    <property type="entry name" value="Heat_shock_Hsp33"/>
    <property type="match status" value="1"/>
</dbReference>
<dbReference type="SUPFAM" id="SSF64397">
    <property type="entry name" value="Hsp33 domain"/>
    <property type="match status" value="1"/>
</dbReference>
<dbReference type="SUPFAM" id="SSF118352">
    <property type="entry name" value="HSP33 redox switch-like"/>
    <property type="match status" value="1"/>
</dbReference>
<feature type="chain" id="PRO_1000095006" description="33 kDa chaperonin">
    <location>
        <begin position="1"/>
        <end position="296"/>
    </location>
</feature>
<feature type="disulfide bond" description="Redox-active" evidence="1">
    <location>
        <begin position="233"/>
        <end position="235"/>
    </location>
</feature>
<feature type="disulfide bond" description="Redox-active" evidence="1">
    <location>
        <begin position="267"/>
        <end position="270"/>
    </location>
</feature>
<comment type="function">
    <text evidence="1">Redox regulated molecular chaperone. Protects both thermally unfolding and oxidatively damaged proteins from irreversible aggregation. Plays an important role in the bacterial defense system toward oxidative stress.</text>
</comment>
<comment type="subcellular location">
    <subcellularLocation>
        <location evidence="1">Cytoplasm</location>
    </subcellularLocation>
</comment>
<comment type="PTM">
    <text evidence="1">Under oxidizing conditions two disulfide bonds are formed involving the reactive cysteines. Under reducing conditions zinc is bound to the reactive cysteines and the protein is inactive.</text>
</comment>
<comment type="similarity">
    <text evidence="1">Belongs to the HSP33 family.</text>
</comment>
<sequence length="296" mass="33543">MSYTKDNDKLYRYLFQNRAVRGEWVRLNDTFTETLNTHQYPKAVQNLLGEMLVATSLLTAIMKFEGTITVQIQGDGPLKLAVVNGNEKQQLRALARTQAEIADNASLSEMIGNGVLVISIMPNDGERYQGVIALDKPTIRECLEDYFIRSEQLQTHLVIRTGEYEGKAVAGGLLLQIMPDGTGMPEDFEHLMTLAETVKDEELFGLEAEELLFRLYHEEQVEVYPPQETEFYCGCSRERSGNAILLLPMEEIDEMLAEKNGVIDMQCECCGTQYFFDKNAIMEFKQEADKLNQLGL</sequence>
<name>HSLO_ACTP7</name>
<proteinExistence type="inferred from homology"/>
<gene>
    <name evidence="1" type="primary">hslO</name>
    <name type="ordered locus">APP7_1366</name>
</gene>